<evidence type="ECO:0000250" key="1"/>
<evidence type="ECO:0000250" key="2">
    <source>
        <dbReference type="UniProtKB" id="Q61112"/>
    </source>
</evidence>
<evidence type="ECO:0000255" key="3"/>
<evidence type="ECO:0000255" key="4">
    <source>
        <dbReference type="PROSITE-ProRule" id="PRU00448"/>
    </source>
</evidence>
<evidence type="ECO:0000305" key="5"/>
<comment type="function">
    <text evidence="1">May regulate calcium-dependent activities in the endoplasmic reticulum lumen or post-ER compartment.</text>
</comment>
<comment type="subcellular location">
    <subcellularLocation>
        <location evidence="2">Golgi apparatus lumen</location>
    </subcellularLocation>
</comment>
<comment type="similarity">
    <text evidence="5">Belongs to the CREC family.</text>
</comment>
<comment type="sequence caution" evidence="5">
    <conflict type="erroneous initiation">
        <sequence resource="EMBL-CDS" id="CAG31798"/>
    </conflict>
</comment>
<dbReference type="EMBL" id="AJ720139">
    <property type="protein sequence ID" value="CAG31798.1"/>
    <property type="status" value="ALT_INIT"/>
    <property type="molecule type" value="mRNA"/>
</dbReference>
<dbReference type="RefSeq" id="NP_001006302.1">
    <property type="nucleotide sequence ID" value="NM_001006302.1"/>
</dbReference>
<dbReference type="RefSeq" id="NP_001384299.1">
    <property type="nucleotide sequence ID" value="NM_001397370.1"/>
</dbReference>
<dbReference type="FunCoup" id="Q5ZKE5">
    <property type="interactions" value="686"/>
</dbReference>
<dbReference type="STRING" id="9031.ENSGALP00000002903"/>
<dbReference type="GlyCosmos" id="Q5ZKE5">
    <property type="glycosylation" value="1 site, No reported glycans"/>
</dbReference>
<dbReference type="GlyGen" id="Q5ZKE5">
    <property type="glycosylation" value="1 site"/>
</dbReference>
<dbReference type="PaxDb" id="9031-ENSGALP00000002903"/>
<dbReference type="GeneID" id="419423"/>
<dbReference type="KEGG" id="gga:419423"/>
<dbReference type="VEuPathDB" id="HostDB:geneid_419423"/>
<dbReference type="eggNOG" id="KOG4251">
    <property type="taxonomic scope" value="Eukaryota"/>
</dbReference>
<dbReference type="HOGENOM" id="CLU_044718_1_0_1"/>
<dbReference type="InParanoid" id="Q5ZKE5"/>
<dbReference type="OMA" id="MNEYSAL"/>
<dbReference type="OrthoDB" id="9978834at2759"/>
<dbReference type="PhylomeDB" id="Q5ZKE5"/>
<dbReference type="TreeFam" id="TF314849"/>
<dbReference type="PRO" id="PR:Q5ZKE5"/>
<dbReference type="Proteomes" id="UP000000539">
    <property type="component" value="Chromosome 21"/>
</dbReference>
<dbReference type="Bgee" id="ENSGALG00000001872">
    <property type="expression patterns" value="Expressed in ovary and 14 other cell types or tissues"/>
</dbReference>
<dbReference type="GO" id="GO:0005783">
    <property type="term" value="C:endoplasmic reticulum"/>
    <property type="evidence" value="ECO:0000318"/>
    <property type="project" value="GO_Central"/>
</dbReference>
<dbReference type="GO" id="GO:0005796">
    <property type="term" value="C:Golgi lumen"/>
    <property type="evidence" value="ECO:0007669"/>
    <property type="project" value="UniProtKB-SubCell"/>
</dbReference>
<dbReference type="GO" id="GO:0005509">
    <property type="term" value="F:calcium ion binding"/>
    <property type="evidence" value="ECO:0000318"/>
    <property type="project" value="GO_Central"/>
</dbReference>
<dbReference type="GO" id="GO:0017156">
    <property type="term" value="P:calcium-ion regulated exocytosis"/>
    <property type="evidence" value="ECO:0000318"/>
    <property type="project" value="GO_Central"/>
</dbReference>
<dbReference type="CDD" id="cd16225">
    <property type="entry name" value="EFh_CREC_cab45"/>
    <property type="match status" value="1"/>
</dbReference>
<dbReference type="FunFam" id="1.10.238.10:FF:000120">
    <property type="entry name" value="45 kDa calcium-binding protein"/>
    <property type="match status" value="1"/>
</dbReference>
<dbReference type="FunFam" id="1.10.238.10:FF:000207">
    <property type="entry name" value="Putative 45 kDa calcium-binding protein"/>
    <property type="match status" value="1"/>
</dbReference>
<dbReference type="Gene3D" id="1.10.238.10">
    <property type="entry name" value="EF-hand"/>
    <property type="match status" value="3"/>
</dbReference>
<dbReference type="InterPro" id="IPR027240">
    <property type="entry name" value="CAB45_EFh"/>
</dbReference>
<dbReference type="InterPro" id="IPR011992">
    <property type="entry name" value="EF-hand-dom_pair"/>
</dbReference>
<dbReference type="InterPro" id="IPR018247">
    <property type="entry name" value="EF_Hand_1_Ca_BS"/>
</dbReference>
<dbReference type="InterPro" id="IPR002048">
    <property type="entry name" value="EF_hand_dom"/>
</dbReference>
<dbReference type="PANTHER" id="PTHR10827:SF98">
    <property type="entry name" value="45 KDA CALCIUM-BINDING PROTEIN"/>
    <property type="match status" value="1"/>
</dbReference>
<dbReference type="PANTHER" id="PTHR10827">
    <property type="entry name" value="RETICULOCALBIN"/>
    <property type="match status" value="1"/>
</dbReference>
<dbReference type="Pfam" id="PF13202">
    <property type="entry name" value="EF-hand_5"/>
    <property type="match status" value="1"/>
</dbReference>
<dbReference type="Pfam" id="PF13499">
    <property type="entry name" value="EF-hand_7"/>
    <property type="match status" value="1"/>
</dbReference>
<dbReference type="SMART" id="SM00054">
    <property type="entry name" value="EFh"/>
    <property type="match status" value="5"/>
</dbReference>
<dbReference type="SUPFAM" id="SSF47473">
    <property type="entry name" value="EF-hand"/>
    <property type="match status" value="2"/>
</dbReference>
<dbReference type="PROSITE" id="PS00018">
    <property type="entry name" value="EF_HAND_1"/>
    <property type="match status" value="5"/>
</dbReference>
<dbReference type="PROSITE" id="PS50222">
    <property type="entry name" value="EF_HAND_2"/>
    <property type="match status" value="5"/>
</dbReference>
<name>CAB45_CHICK</name>
<proteinExistence type="evidence at transcript level"/>
<reference key="1">
    <citation type="journal article" date="2005" name="Genome Biol.">
        <title>Full-length cDNAs from chicken bursal lymphocytes to facilitate gene function analysis.</title>
        <authorList>
            <person name="Caldwell R.B."/>
            <person name="Kierzek A.M."/>
            <person name="Arakawa H."/>
            <person name="Bezzubov Y."/>
            <person name="Zaim J."/>
            <person name="Fiedler P."/>
            <person name="Kutter S."/>
            <person name="Blagodatski A."/>
            <person name="Kostovska D."/>
            <person name="Koter M."/>
            <person name="Plachy J."/>
            <person name="Carninci P."/>
            <person name="Hayashizaki Y."/>
            <person name="Buerstedde J.-M."/>
        </authorList>
    </citation>
    <scope>NUCLEOTIDE SEQUENCE [LARGE SCALE MRNA]</scope>
    <source>
        <strain>CB</strain>
        <tissue>Bursa of Fabricius</tissue>
    </source>
</reference>
<keyword id="KW-0106">Calcium</keyword>
<keyword id="KW-0325">Glycoprotein</keyword>
<keyword id="KW-0333">Golgi apparatus</keyword>
<keyword id="KW-0479">Metal-binding</keyword>
<keyword id="KW-1185">Reference proteome</keyword>
<keyword id="KW-0677">Repeat</keyword>
<keyword id="KW-0732">Signal</keyword>
<feature type="signal peptide" evidence="3">
    <location>
        <begin position="1"/>
        <end position="29"/>
    </location>
</feature>
<feature type="chain" id="PRO_0000377518" description="45 kDa calcium-binding protein">
    <location>
        <begin position="30"/>
        <end position="356"/>
    </location>
</feature>
<feature type="domain" description="EF-hand 1" evidence="4">
    <location>
        <begin position="92"/>
        <end position="127"/>
    </location>
</feature>
<feature type="domain" description="EF-hand 2" evidence="4">
    <location>
        <begin position="131"/>
        <end position="166"/>
    </location>
</feature>
<feature type="domain" description="EF-hand 3" evidence="4">
    <location>
        <begin position="227"/>
        <end position="262"/>
    </location>
</feature>
<feature type="domain" description="EF-hand 4" evidence="4">
    <location>
        <begin position="272"/>
        <end position="307"/>
    </location>
</feature>
<feature type="domain" description="EF-hand 5" evidence="4">
    <location>
        <begin position="308"/>
        <end position="343"/>
    </location>
</feature>
<feature type="binding site" evidence="4">
    <location>
        <position position="105"/>
    </location>
    <ligand>
        <name>Ca(2+)</name>
        <dbReference type="ChEBI" id="CHEBI:29108"/>
        <label>1</label>
    </ligand>
</feature>
<feature type="binding site" evidence="4">
    <location>
        <position position="107"/>
    </location>
    <ligand>
        <name>Ca(2+)</name>
        <dbReference type="ChEBI" id="CHEBI:29108"/>
        <label>1</label>
    </ligand>
</feature>
<feature type="binding site" evidence="4">
    <location>
        <position position="109"/>
    </location>
    <ligand>
        <name>Ca(2+)</name>
        <dbReference type="ChEBI" id="CHEBI:29108"/>
        <label>1</label>
    </ligand>
</feature>
<feature type="binding site" evidence="4">
    <location>
        <position position="111"/>
    </location>
    <ligand>
        <name>Ca(2+)</name>
        <dbReference type="ChEBI" id="CHEBI:29108"/>
        <label>1</label>
    </ligand>
</feature>
<feature type="binding site" evidence="4">
    <location>
        <position position="116"/>
    </location>
    <ligand>
        <name>Ca(2+)</name>
        <dbReference type="ChEBI" id="CHEBI:29108"/>
        <label>1</label>
    </ligand>
</feature>
<feature type="binding site" evidence="4">
    <location>
        <position position="144"/>
    </location>
    <ligand>
        <name>Ca(2+)</name>
        <dbReference type="ChEBI" id="CHEBI:29108"/>
        <label>2</label>
    </ligand>
</feature>
<feature type="binding site" evidence="4">
    <location>
        <position position="146"/>
    </location>
    <ligand>
        <name>Ca(2+)</name>
        <dbReference type="ChEBI" id="CHEBI:29108"/>
        <label>2</label>
    </ligand>
</feature>
<feature type="binding site" evidence="4">
    <location>
        <position position="148"/>
    </location>
    <ligand>
        <name>Ca(2+)</name>
        <dbReference type="ChEBI" id="CHEBI:29108"/>
        <label>2</label>
    </ligand>
</feature>
<feature type="binding site" evidence="4">
    <location>
        <position position="150"/>
    </location>
    <ligand>
        <name>Ca(2+)</name>
        <dbReference type="ChEBI" id="CHEBI:29108"/>
        <label>2</label>
    </ligand>
</feature>
<feature type="binding site" evidence="4">
    <location>
        <position position="155"/>
    </location>
    <ligand>
        <name>Ca(2+)</name>
        <dbReference type="ChEBI" id="CHEBI:29108"/>
        <label>2</label>
    </ligand>
</feature>
<feature type="binding site" evidence="4">
    <location>
        <position position="240"/>
    </location>
    <ligand>
        <name>Ca(2+)</name>
        <dbReference type="ChEBI" id="CHEBI:29108"/>
        <label>3</label>
    </ligand>
</feature>
<feature type="binding site" evidence="4">
    <location>
        <position position="242"/>
    </location>
    <ligand>
        <name>Ca(2+)</name>
        <dbReference type="ChEBI" id="CHEBI:29108"/>
        <label>3</label>
    </ligand>
</feature>
<feature type="binding site" evidence="4">
    <location>
        <position position="244"/>
    </location>
    <ligand>
        <name>Ca(2+)</name>
        <dbReference type="ChEBI" id="CHEBI:29108"/>
        <label>3</label>
    </ligand>
</feature>
<feature type="binding site" evidence="4">
    <location>
        <position position="246"/>
    </location>
    <ligand>
        <name>Ca(2+)</name>
        <dbReference type="ChEBI" id="CHEBI:29108"/>
        <label>3</label>
    </ligand>
</feature>
<feature type="binding site" evidence="4">
    <location>
        <position position="251"/>
    </location>
    <ligand>
        <name>Ca(2+)</name>
        <dbReference type="ChEBI" id="CHEBI:29108"/>
        <label>3</label>
    </ligand>
</feature>
<feature type="binding site" evidence="4">
    <location>
        <position position="285"/>
    </location>
    <ligand>
        <name>Ca(2+)</name>
        <dbReference type="ChEBI" id="CHEBI:29108"/>
        <label>4</label>
    </ligand>
</feature>
<feature type="binding site" evidence="4">
    <location>
        <position position="287"/>
    </location>
    <ligand>
        <name>Ca(2+)</name>
        <dbReference type="ChEBI" id="CHEBI:29108"/>
        <label>4</label>
    </ligand>
</feature>
<feature type="binding site" evidence="4">
    <location>
        <position position="289"/>
    </location>
    <ligand>
        <name>Ca(2+)</name>
        <dbReference type="ChEBI" id="CHEBI:29108"/>
        <label>4</label>
    </ligand>
</feature>
<feature type="binding site" evidence="4">
    <location>
        <position position="296"/>
    </location>
    <ligand>
        <name>Ca(2+)</name>
        <dbReference type="ChEBI" id="CHEBI:29108"/>
        <label>4</label>
    </ligand>
</feature>
<feature type="binding site" evidence="4">
    <location>
        <position position="321"/>
    </location>
    <ligand>
        <name>Ca(2+)</name>
        <dbReference type="ChEBI" id="CHEBI:29108"/>
        <label>5</label>
    </ligand>
</feature>
<feature type="binding site" evidence="4">
    <location>
        <position position="323"/>
    </location>
    <ligand>
        <name>Ca(2+)</name>
        <dbReference type="ChEBI" id="CHEBI:29108"/>
        <label>5</label>
    </ligand>
</feature>
<feature type="binding site" evidence="4">
    <location>
        <position position="325"/>
    </location>
    <ligand>
        <name>Ca(2+)</name>
        <dbReference type="ChEBI" id="CHEBI:29108"/>
        <label>5</label>
    </ligand>
</feature>
<feature type="binding site" evidence="4">
    <location>
        <position position="327"/>
    </location>
    <ligand>
        <name>Ca(2+)</name>
        <dbReference type="ChEBI" id="CHEBI:29108"/>
        <label>5</label>
    </ligand>
</feature>
<feature type="binding site" evidence="4">
    <location>
        <position position="332"/>
    </location>
    <ligand>
        <name>Ca(2+)</name>
        <dbReference type="ChEBI" id="CHEBI:29108"/>
        <label>5</label>
    </ligand>
</feature>
<feature type="glycosylation site" description="N-linked (GlcNAc...) asparagine" evidence="3">
    <location>
        <position position="33"/>
    </location>
</feature>
<gene>
    <name type="primary">SDF4</name>
    <name type="synonym">CAB45</name>
    <name type="ORF">RCJMB04_11g4</name>
</gene>
<accession>Q5ZKE5</accession>
<protein>
    <recommendedName>
        <fullName>45 kDa calcium-binding protein</fullName>
        <shortName>Cab45</shortName>
    </recommendedName>
    <alternativeName>
        <fullName>Stromal cell-derived factor 4</fullName>
        <shortName>SDF-4</shortName>
    </alternativeName>
</protein>
<organism>
    <name type="scientific">Gallus gallus</name>
    <name type="common">Chicken</name>
    <dbReference type="NCBI Taxonomy" id="9031"/>
    <lineage>
        <taxon>Eukaryota</taxon>
        <taxon>Metazoa</taxon>
        <taxon>Chordata</taxon>
        <taxon>Craniata</taxon>
        <taxon>Vertebrata</taxon>
        <taxon>Euteleostomi</taxon>
        <taxon>Archelosauria</taxon>
        <taxon>Archosauria</taxon>
        <taxon>Dinosauria</taxon>
        <taxon>Saurischia</taxon>
        <taxon>Theropoda</taxon>
        <taxon>Coelurosauria</taxon>
        <taxon>Aves</taxon>
        <taxon>Neognathae</taxon>
        <taxon>Galloanserae</taxon>
        <taxon>Galliformes</taxon>
        <taxon>Phasianidae</taxon>
        <taxon>Phasianinae</taxon>
        <taxon>Gallus</taxon>
    </lineage>
</organism>
<sequence length="356" mass="41907">MMSRQAFLCSLGSLYLSLLFVFLLMDVYARPANNSALKEKPADSRDENEILPPDHLNGVKMEMDGHLNKEFHQEVFLGKEMEEFEEDSEPRKNRKKLMVIFSKVDIDNDKKISAKEMQRWIMEKTDEHFQEAVEENKMHFRAVDPDGDGHVSWDEYKIKFLASKGLNEKEIAEKIKNNEELKIDEETQEVLDNLKDRWYQADNPPPDMLLNEEEFLSFLHPEHSRGMLKFMVKEIIRDLDQDGDKKLTLSEFISLPVGTVENQQAQDIDDDWVKDRRKEFEDVIDANHDGIVTMEELEEYMDPMNEYNALNEAKQMIAVADENQNHHLELEEILKYSEYFTGSKLMDYARNVHEEF</sequence>